<dbReference type="EMBL" id="CP000038">
    <property type="protein sequence ID" value="AAZ90005.1"/>
    <property type="molecule type" value="Genomic_DNA"/>
</dbReference>
<dbReference type="RefSeq" id="WP_001140433.1">
    <property type="nucleotide sequence ID" value="NC_007384.1"/>
</dbReference>
<dbReference type="SMR" id="Q3YWV7"/>
<dbReference type="GeneID" id="93778685"/>
<dbReference type="KEGG" id="ssn:SSON_3443"/>
<dbReference type="HOGENOM" id="CLU_131047_1_4_6"/>
<dbReference type="Proteomes" id="UP000002529">
    <property type="component" value="Chromosome"/>
</dbReference>
<dbReference type="GO" id="GO:0022625">
    <property type="term" value="C:cytosolic large ribosomal subunit"/>
    <property type="evidence" value="ECO:0007669"/>
    <property type="project" value="TreeGrafter"/>
</dbReference>
<dbReference type="GO" id="GO:0003735">
    <property type="term" value="F:structural constituent of ribosome"/>
    <property type="evidence" value="ECO:0007669"/>
    <property type="project" value="InterPro"/>
</dbReference>
<dbReference type="GO" id="GO:0006412">
    <property type="term" value="P:translation"/>
    <property type="evidence" value="ECO:0007669"/>
    <property type="project" value="UniProtKB-UniRule"/>
</dbReference>
<dbReference type="CDD" id="cd01658">
    <property type="entry name" value="Ribosomal_L30"/>
    <property type="match status" value="1"/>
</dbReference>
<dbReference type="FunFam" id="3.30.1390.20:FF:000001">
    <property type="entry name" value="50S ribosomal protein L30"/>
    <property type="match status" value="1"/>
</dbReference>
<dbReference type="Gene3D" id="3.30.1390.20">
    <property type="entry name" value="Ribosomal protein L30, ferredoxin-like fold domain"/>
    <property type="match status" value="1"/>
</dbReference>
<dbReference type="HAMAP" id="MF_01371_B">
    <property type="entry name" value="Ribosomal_uL30_B"/>
    <property type="match status" value="1"/>
</dbReference>
<dbReference type="InterPro" id="IPR036919">
    <property type="entry name" value="Ribo_uL30_ferredoxin-like_sf"/>
</dbReference>
<dbReference type="InterPro" id="IPR005996">
    <property type="entry name" value="Ribosomal_uL30_bac-type"/>
</dbReference>
<dbReference type="InterPro" id="IPR018038">
    <property type="entry name" value="Ribosomal_uL30_CS"/>
</dbReference>
<dbReference type="InterPro" id="IPR016082">
    <property type="entry name" value="Ribosomal_uL30_ferredoxin-like"/>
</dbReference>
<dbReference type="NCBIfam" id="TIGR01308">
    <property type="entry name" value="rpmD_bact"/>
    <property type="match status" value="1"/>
</dbReference>
<dbReference type="PANTHER" id="PTHR15892:SF2">
    <property type="entry name" value="LARGE RIBOSOMAL SUBUNIT PROTEIN UL30M"/>
    <property type="match status" value="1"/>
</dbReference>
<dbReference type="PANTHER" id="PTHR15892">
    <property type="entry name" value="MITOCHONDRIAL RIBOSOMAL PROTEIN L30"/>
    <property type="match status" value="1"/>
</dbReference>
<dbReference type="Pfam" id="PF00327">
    <property type="entry name" value="Ribosomal_L30"/>
    <property type="match status" value="1"/>
</dbReference>
<dbReference type="PIRSF" id="PIRSF002211">
    <property type="entry name" value="Ribosomal_L30_bac-type"/>
    <property type="match status" value="1"/>
</dbReference>
<dbReference type="SUPFAM" id="SSF55129">
    <property type="entry name" value="Ribosomal protein L30p/L7e"/>
    <property type="match status" value="1"/>
</dbReference>
<dbReference type="PROSITE" id="PS00634">
    <property type="entry name" value="RIBOSOMAL_L30"/>
    <property type="match status" value="1"/>
</dbReference>
<protein>
    <recommendedName>
        <fullName evidence="1">Large ribosomal subunit protein uL30</fullName>
    </recommendedName>
    <alternativeName>
        <fullName evidence="2">50S ribosomal protein L30</fullName>
    </alternativeName>
</protein>
<gene>
    <name evidence="1" type="primary">rpmD</name>
    <name type="ordered locus">SSON_3443</name>
</gene>
<sequence length="59" mass="6542">MAKTIKITQTRSAIGRLPKHKATLLGLGLRRIGHTVEREDTPAIRGMINAVSFMVKVEE</sequence>
<feature type="chain" id="PRO_0000273857" description="Large ribosomal subunit protein uL30">
    <location>
        <begin position="1"/>
        <end position="59"/>
    </location>
</feature>
<organism>
    <name type="scientific">Shigella sonnei (strain Ss046)</name>
    <dbReference type="NCBI Taxonomy" id="300269"/>
    <lineage>
        <taxon>Bacteria</taxon>
        <taxon>Pseudomonadati</taxon>
        <taxon>Pseudomonadota</taxon>
        <taxon>Gammaproteobacteria</taxon>
        <taxon>Enterobacterales</taxon>
        <taxon>Enterobacteriaceae</taxon>
        <taxon>Shigella</taxon>
    </lineage>
</organism>
<proteinExistence type="inferred from homology"/>
<evidence type="ECO:0000255" key="1">
    <source>
        <dbReference type="HAMAP-Rule" id="MF_01371"/>
    </source>
</evidence>
<evidence type="ECO:0000305" key="2"/>
<reference key="1">
    <citation type="journal article" date="2005" name="Nucleic Acids Res.">
        <title>Genome dynamics and diversity of Shigella species, the etiologic agents of bacillary dysentery.</title>
        <authorList>
            <person name="Yang F."/>
            <person name="Yang J."/>
            <person name="Zhang X."/>
            <person name="Chen L."/>
            <person name="Jiang Y."/>
            <person name="Yan Y."/>
            <person name="Tang X."/>
            <person name="Wang J."/>
            <person name="Xiong Z."/>
            <person name="Dong J."/>
            <person name="Xue Y."/>
            <person name="Zhu Y."/>
            <person name="Xu X."/>
            <person name="Sun L."/>
            <person name="Chen S."/>
            <person name="Nie H."/>
            <person name="Peng J."/>
            <person name="Xu J."/>
            <person name="Wang Y."/>
            <person name="Yuan Z."/>
            <person name="Wen Y."/>
            <person name="Yao Z."/>
            <person name="Shen Y."/>
            <person name="Qiang B."/>
            <person name="Hou Y."/>
            <person name="Yu J."/>
            <person name="Jin Q."/>
        </authorList>
    </citation>
    <scope>NUCLEOTIDE SEQUENCE [LARGE SCALE GENOMIC DNA]</scope>
    <source>
        <strain>Ss046</strain>
    </source>
</reference>
<name>RL30_SHISS</name>
<keyword id="KW-1185">Reference proteome</keyword>
<keyword id="KW-0687">Ribonucleoprotein</keyword>
<keyword id="KW-0689">Ribosomal protein</keyword>
<accession>Q3YWV7</accession>
<comment type="subunit">
    <text evidence="1">Part of the 50S ribosomal subunit.</text>
</comment>
<comment type="similarity">
    <text evidence="1">Belongs to the universal ribosomal protein uL30 family.</text>
</comment>